<sequence length="418" mass="45233">MFKDISIKDFDPVLAKAMAAESVRQENHIELIASENYCSQAVMEAQGTDLTNKYAEGYPGKRYYGGCEHVDVVEQLAIDRAKELFGAEYVNVQPHSGSQANSAVFLALLEANDTVLGMSLDAGGHLTHGAHINFSGLNYNAVQYGLVEGTGLIDYDQVESLAKEHKPKMIIAGFSAYSQVVDWARFREIADEVGAYLLVDMAHVAGLIAGGVYPSPVPFADVVTTTTHKTLRGPRSGMILARDEKLAKKLNSAVFPGNQGGPLMHVIAAKAICFKEALENNFKTYQQQVVKNAQAMAKVIQERGYEIISGGTENHLMLISLVKQEMTGKEADKWLGDAHITVNKNAVPNDPKSPFVTSGIRIGTPAITTRGFNEAQAGALAGWICDVLDSRGDEAATAEVRSKVEAICKELPVYAKNQ</sequence>
<comment type="function">
    <text evidence="1">Catalyzes the reversible interconversion of serine and glycine with tetrahydrofolate (THF) serving as the one-carbon carrier. This reaction serves as the major source of one-carbon groups required for the biosynthesis of purines, thymidylate, methionine, and other important biomolecules. Also exhibits THF-independent aldolase activity toward beta-hydroxyamino acids, producing glycine and aldehydes, via a retro-aldol mechanism.</text>
</comment>
<comment type="catalytic activity">
    <reaction evidence="1">
        <text>(6R)-5,10-methylene-5,6,7,8-tetrahydrofolate + glycine + H2O = (6S)-5,6,7,8-tetrahydrofolate + L-serine</text>
        <dbReference type="Rhea" id="RHEA:15481"/>
        <dbReference type="ChEBI" id="CHEBI:15377"/>
        <dbReference type="ChEBI" id="CHEBI:15636"/>
        <dbReference type="ChEBI" id="CHEBI:33384"/>
        <dbReference type="ChEBI" id="CHEBI:57305"/>
        <dbReference type="ChEBI" id="CHEBI:57453"/>
        <dbReference type="EC" id="2.1.2.1"/>
    </reaction>
</comment>
<comment type="cofactor">
    <cofactor evidence="1">
        <name>pyridoxal 5'-phosphate</name>
        <dbReference type="ChEBI" id="CHEBI:597326"/>
    </cofactor>
</comment>
<comment type="pathway">
    <text evidence="1">One-carbon metabolism; tetrahydrofolate interconversion.</text>
</comment>
<comment type="pathway">
    <text evidence="1">Amino-acid biosynthesis; glycine biosynthesis; glycine from L-serine: step 1/1.</text>
</comment>
<comment type="subunit">
    <text evidence="1">Homodimer.</text>
</comment>
<comment type="subcellular location">
    <subcellularLocation>
        <location evidence="1">Cytoplasm</location>
    </subcellularLocation>
</comment>
<comment type="similarity">
    <text evidence="1">Belongs to the SHMT family.</text>
</comment>
<reference key="1">
    <citation type="journal article" date="2010" name="Appl. Environ. Microbiol.">
        <title>The genome sequence of Psychrobacter arcticus 273-4, a psychroactive Siberian permafrost bacterium, reveals mechanisms for adaptation to low-temperature growth.</title>
        <authorList>
            <person name="Ayala-del-Rio H.L."/>
            <person name="Chain P.S."/>
            <person name="Grzymski J.J."/>
            <person name="Ponder M.A."/>
            <person name="Ivanova N."/>
            <person name="Bergholz P.W."/>
            <person name="Di Bartolo G."/>
            <person name="Hauser L."/>
            <person name="Land M."/>
            <person name="Bakermans C."/>
            <person name="Rodrigues D."/>
            <person name="Klappenbach J."/>
            <person name="Zarka D."/>
            <person name="Larimer F."/>
            <person name="Richardson P."/>
            <person name="Murray A."/>
            <person name="Thomashow M."/>
            <person name="Tiedje J.M."/>
        </authorList>
    </citation>
    <scope>NUCLEOTIDE SEQUENCE [LARGE SCALE GENOMIC DNA]</scope>
    <source>
        <strain>DSM 17307 / VKM B-2377 / 273-4</strain>
    </source>
</reference>
<proteinExistence type="inferred from homology"/>
<dbReference type="EC" id="2.1.2.1" evidence="1"/>
<dbReference type="EMBL" id="CP000082">
    <property type="protein sequence ID" value="AAZ18160.1"/>
    <property type="molecule type" value="Genomic_DNA"/>
</dbReference>
<dbReference type="RefSeq" id="WP_011279598.1">
    <property type="nucleotide sequence ID" value="NC_007204.1"/>
</dbReference>
<dbReference type="SMR" id="Q4FUZ8"/>
<dbReference type="STRING" id="259536.Psyc_0290"/>
<dbReference type="KEGG" id="par:Psyc_0290"/>
<dbReference type="eggNOG" id="COG0112">
    <property type="taxonomic scope" value="Bacteria"/>
</dbReference>
<dbReference type="HOGENOM" id="CLU_022477_2_1_6"/>
<dbReference type="OrthoDB" id="9803846at2"/>
<dbReference type="UniPathway" id="UPA00193"/>
<dbReference type="UniPathway" id="UPA00288">
    <property type="reaction ID" value="UER01023"/>
</dbReference>
<dbReference type="Proteomes" id="UP000000546">
    <property type="component" value="Chromosome"/>
</dbReference>
<dbReference type="GO" id="GO:0005829">
    <property type="term" value="C:cytosol"/>
    <property type="evidence" value="ECO:0007669"/>
    <property type="project" value="TreeGrafter"/>
</dbReference>
<dbReference type="GO" id="GO:0004372">
    <property type="term" value="F:glycine hydroxymethyltransferase activity"/>
    <property type="evidence" value="ECO:0007669"/>
    <property type="project" value="UniProtKB-UniRule"/>
</dbReference>
<dbReference type="GO" id="GO:0030170">
    <property type="term" value="F:pyridoxal phosphate binding"/>
    <property type="evidence" value="ECO:0007669"/>
    <property type="project" value="UniProtKB-UniRule"/>
</dbReference>
<dbReference type="GO" id="GO:0019264">
    <property type="term" value="P:glycine biosynthetic process from serine"/>
    <property type="evidence" value="ECO:0007669"/>
    <property type="project" value="UniProtKB-UniRule"/>
</dbReference>
<dbReference type="GO" id="GO:0035999">
    <property type="term" value="P:tetrahydrofolate interconversion"/>
    <property type="evidence" value="ECO:0007669"/>
    <property type="project" value="UniProtKB-UniRule"/>
</dbReference>
<dbReference type="CDD" id="cd00378">
    <property type="entry name" value="SHMT"/>
    <property type="match status" value="1"/>
</dbReference>
<dbReference type="FunFam" id="3.40.640.10:FF:000001">
    <property type="entry name" value="Serine hydroxymethyltransferase"/>
    <property type="match status" value="1"/>
</dbReference>
<dbReference type="FunFam" id="3.90.1150.10:FF:000003">
    <property type="entry name" value="Serine hydroxymethyltransferase"/>
    <property type="match status" value="1"/>
</dbReference>
<dbReference type="Gene3D" id="3.90.1150.10">
    <property type="entry name" value="Aspartate Aminotransferase, domain 1"/>
    <property type="match status" value="1"/>
</dbReference>
<dbReference type="Gene3D" id="3.40.640.10">
    <property type="entry name" value="Type I PLP-dependent aspartate aminotransferase-like (Major domain)"/>
    <property type="match status" value="1"/>
</dbReference>
<dbReference type="HAMAP" id="MF_00051">
    <property type="entry name" value="SHMT"/>
    <property type="match status" value="1"/>
</dbReference>
<dbReference type="InterPro" id="IPR015424">
    <property type="entry name" value="PyrdxlP-dep_Trfase"/>
</dbReference>
<dbReference type="InterPro" id="IPR015421">
    <property type="entry name" value="PyrdxlP-dep_Trfase_major"/>
</dbReference>
<dbReference type="InterPro" id="IPR015422">
    <property type="entry name" value="PyrdxlP-dep_Trfase_small"/>
</dbReference>
<dbReference type="InterPro" id="IPR001085">
    <property type="entry name" value="Ser_HO-MeTrfase"/>
</dbReference>
<dbReference type="InterPro" id="IPR049943">
    <property type="entry name" value="Ser_HO-MeTrfase-like"/>
</dbReference>
<dbReference type="InterPro" id="IPR019798">
    <property type="entry name" value="Ser_HO-MeTrfase_PLP_BS"/>
</dbReference>
<dbReference type="InterPro" id="IPR039429">
    <property type="entry name" value="SHMT-like_dom"/>
</dbReference>
<dbReference type="NCBIfam" id="NF000586">
    <property type="entry name" value="PRK00011.1"/>
    <property type="match status" value="1"/>
</dbReference>
<dbReference type="PANTHER" id="PTHR11680">
    <property type="entry name" value="SERINE HYDROXYMETHYLTRANSFERASE"/>
    <property type="match status" value="1"/>
</dbReference>
<dbReference type="PANTHER" id="PTHR11680:SF50">
    <property type="entry name" value="SERINE HYDROXYMETHYLTRANSFERASE"/>
    <property type="match status" value="1"/>
</dbReference>
<dbReference type="Pfam" id="PF00464">
    <property type="entry name" value="SHMT"/>
    <property type="match status" value="1"/>
</dbReference>
<dbReference type="PIRSF" id="PIRSF000412">
    <property type="entry name" value="SHMT"/>
    <property type="match status" value="1"/>
</dbReference>
<dbReference type="SUPFAM" id="SSF53383">
    <property type="entry name" value="PLP-dependent transferases"/>
    <property type="match status" value="1"/>
</dbReference>
<dbReference type="PROSITE" id="PS00096">
    <property type="entry name" value="SHMT"/>
    <property type="match status" value="1"/>
</dbReference>
<accession>Q4FUZ8</accession>
<protein>
    <recommendedName>
        <fullName evidence="1">Serine hydroxymethyltransferase</fullName>
        <shortName evidence="1">SHMT</shortName>
        <shortName evidence="1">Serine methylase</shortName>
        <ecNumber evidence="1">2.1.2.1</ecNumber>
    </recommendedName>
</protein>
<name>GLYA_PSYA2</name>
<evidence type="ECO:0000255" key="1">
    <source>
        <dbReference type="HAMAP-Rule" id="MF_00051"/>
    </source>
</evidence>
<keyword id="KW-0028">Amino-acid biosynthesis</keyword>
<keyword id="KW-0963">Cytoplasm</keyword>
<keyword id="KW-0554">One-carbon metabolism</keyword>
<keyword id="KW-0663">Pyridoxal phosphate</keyword>
<keyword id="KW-1185">Reference proteome</keyword>
<keyword id="KW-0808">Transferase</keyword>
<feature type="chain" id="PRO_0000235011" description="Serine hydroxymethyltransferase">
    <location>
        <begin position="1"/>
        <end position="418"/>
    </location>
</feature>
<feature type="binding site" evidence="1">
    <location>
        <position position="120"/>
    </location>
    <ligand>
        <name>(6S)-5,6,7,8-tetrahydrofolate</name>
        <dbReference type="ChEBI" id="CHEBI:57453"/>
    </ligand>
</feature>
<feature type="binding site" evidence="1">
    <location>
        <begin position="124"/>
        <end position="126"/>
    </location>
    <ligand>
        <name>(6S)-5,6,7,8-tetrahydrofolate</name>
        <dbReference type="ChEBI" id="CHEBI:57453"/>
    </ligand>
</feature>
<feature type="binding site" evidence="1">
    <location>
        <begin position="353"/>
        <end position="355"/>
    </location>
    <ligand>
        <name>(6S)-5,6,7,8-tetrahydrofolate</name>
        <dbReference type="ChEBI" id="CHEBI:57453"/>
    </ligand>
</feature>
<feature type="site" description="Plays an important role in substrate specificity" evidence="1">
    <location>
        <position position="228"/>
    </location>
</feature>
<feature type="modified residue" description="N6-(pyridoxal phosphate)lysine" evidence="1">
    <location>
        <position position="229"/>
    </location>
</feature>
<organism>
    <name type="scientific">Psychrobacter arcticus (strain DSM 17307 / VKM B-2377 / 273-4)</name>
    <dbReference type="NCBI Taxonomy" id="259536"/>
    <lineage>
        <taxon>Bacteria</taxon>
        <taxon>Pseudomonadati</taxon>
        <taxon>Pseudomonadota</taxon>
        <taxon>Gammaproteobacteria</taxon>
        <taxon>Moraxellales</taxon>
        <taxon>Moraxellaceae</taxon>
        <taxon>Psychrobacter</taxon>
    </lineage>
</organism>
<gene>
    <name evidence="1" type="primary">glyA</name>
    <name type="ordered locus">Psyc_0290</name>
</gene>